<reference key="1">
    <citation type="submission" date="2009-06" db="EMBL/GenBank/DDBJ databases">
        <title>Complete sequence of Thermotogales bacterium TBF 19.5.1.</title>
        <authorList>
            <consortium name="US DOE Joint Genome Institute"/>
            <person name="Lucas S."/>
            <person name="Copeland A."/>
            <person name="Lapidus A."/>
            <person name="Glavina del Rio T."/>
            <person name="Tice H."/>
            <person name="Bruce D."/>
            <person name="Goodwin L."/>
            <person name="Pitluck S."/>
            <person name="Chertkov O."/>
            <person name="Brettin T."/>
            <person name="Detter J.C."/>
            <person name="Han C."/>
            <person name="Schmutz J."/>
            <person name="Larimer F."/>
            <person name="Land M."/>
            <person name="Hauser L."/>
            <person name="Kyrpides N."/>
            <person name="Ovchinnikova G."/>
            <person name="Noll K."/>
        </authorList>
    </citation>
    <scope>NUCLEOTIDE SEQUENCE [LARGE SCALE GENOMIC DNA]</scope>
    <source>
        <strain>ATCC BAA-1733 / DSM 21960 / TBF 19.5.1</strain>
    </source>
</reference>
<name>RL30_KOSOT</name>
<organism>
    <name type="scientific">Kosmotoga olearia (strain ATCC BAA-1733 / DSM 21960 / TBF 19.5.1)</name>
    <dbReference type="NCBI Taxonomy" id="521045"/>
    <lineage>
        <taxon>Bacteria</taxon>
        <taxon>Thermotogati</taxon>
        <taxon>Thermotogota</taxon>
        <taxon>Thermotogae</taxon>
        <taxon>Kosmotogales</taxon>
        <taxon>Kosmotogaceae</taxon>
        <taxon>Kosmotoga</taxon>
    </lineage>
</organism>
<keyword id="KW-1185">Reference proteome</keyword>
<keyword id="KW-0687">Ribonucleoprotein</keyword>
<keyword id="KW-0689">Ribosomal protein</keyword>
<accession>C5CGI4</accession>
<protein>
    <recommendedName>
        <fullName evidence="1">Large ribosomal subunit protein uL30</fullName>
    </recommendedName>
    <alternativeName>
        <fullName evidence="2">50S ribosomal protein L30</fullName>
    </alternativeName>
</protein>
<feature type="chain" id="PRO_1000215067" description="Large ribosomal subunit protein uL30">
    <location>
        <begin position="1"/>
        <end position="62"/>
    </location>
</feature>
<dbReference type="EMBL" id="CP001634">
    <property type="protein sequence ID" value="ACR80565.1"/>
    <property type="molecule type" value="Genomic_DNA"/>
</dbReference>
<dbReference type="RefSeq" id="WP_015869208.1">
    <property type="nucleotide sequence ID" value="NC_012785.1"/>
</dbReference>
<dbReference type="SMR" id="C5CGI4"/>
<dbReference type="STRING" id="521045.Kole_1884"/>
<dbReference type="KEGG" id="kol:Kole_1884"/>
<dbReference type="eggNOG" id="COG1841">
    <property type="taxonomic scope" value="Bacteria"/>
</dbReference>
<dbReference type="HOGENOM" id="CLU_131047_2_1_0"/>
<dbReference type="OrthoDB" id="9812790at2"/>
<dbReference type="Proteomes" id="UP000002382">
    <property type="component" value="Chromosome"/>
</dbReference>
<dbReference type="GO" id="GO:0022625">
    <property type="term" value="C:cytosolic large ribosomal subunit"/>
    <property type="evidence" value="ECO:0007669"/>
    <property type="project" value="TreeGrafter"/>
</dbReference>
<dbReference type="GO" id="GO:0003735">
    <property type="term" value="F:structural constituent of ribosome"/>
    <property type="evidence" value="ECO:0007669"/>
    <property type="project" value="InterPro"/>
</dbReference>
<dbReference type="GO" id="GO:0006412">
    <property type="term" value="P:translation"/>
    <property type="evidence" value="ECO:0007669"/>
    <property type="project" value="UniProtKB-UniRule"/>
</dbReference>
<dbReference type="CDD" id="cd01658">
    <property type="entry name" value="Ribosomal_L30"/>
    <property type="match status" value="1"/>
</dbReference>
<dbReference type="FunFam" id="3.30.1390.20:FF:000001">
    <property type="entry name" value="50S ribosomal protein L30"/>
    <property type="match status" value="1"/>
</dbReference>
<dbReference type="Gene3D" id="3.30.1390.20">
    <property type="entry name" value="Ribosomal protein L30, ferredoxin-like fold domain"/>
    <property type="match status" value="1"/>
</dbReference>
<dbReference type="HAMAP" id="MF_01371_B">
    <property type="entry name" value="Ribosomal_uL30_B"/>
    <property type="match status" value="1"/>
</dbReference>
<dbReference type="InterPro" id="IPR036919">
    <property type="entry name" value="Ribo_uL30_ferredoxin-like_sf"/>
</dbReference>
<dbReference type="InterPro" id="IPR005996">
    <property type="entry name" value="Ribosomal_uL30_bac-type"/>
</dbReference>
<dbReference type="InterPro" id="IPR016082">
    <property type="entry name" value="Ribosomal_uL30_ferredoxin-like"/>
</dbReference>
<dbReference type="NCBIfam" id="TIGR01308">
    <property type="entry name" value="rpmD_bact"/>
    <property type="match status" value="1"/>
</dbReference>
<dbReference type="PANTHER" id="PTHR15892:SF2">
    <property type="entry name" value="LARGE RIBOSOMAL SUBUNIT PROTEIN UL30M"/>
    <property type="match status" value="1"/>
</dbReference>
<dbReference type="PANTHER" id="PTHR15892">
    <property type="entry name" value="MITOCHONDRIAL RIBOSOMAL PROTEIN L30"/>
    <property type="match status" value="1"/>
</dbReference>
<dbReference type="Pfam" id="PF00327">
    <property type="entry name" value="Ribosomal_L30"/>
    <property type="match status" value="1"/>
</dbReference>
<dbReference type="PIRSF" id="PIRSF002211">
    <property type="entry name" value="Ribosomal_L30_bac-type"/>
    <property type="match status" value="1"/>
</dbReference>
<dbReference type="SUPFAM" id="SSF55129">
    <property type="entry name" value="Ribosomal protein L30p/L7e"/>
    <property type="match status" value="1"/>
</dbReference>
<comment type="subunit">
    <text evidence="1">Part of the 50S ribosomal subunit.</text>
</comment>
<comment type="similarity">
    <text evidence="1">Belongs to the universal ribosomal protein uL30 family.</text>
</comment>
<sequence length="62" mass="7094">MAKKLKIKLVKSPIGYNRRQRATLKALGLRKISDEVVHDDSPQIRGMINAVIHMLEVKEIEN</sequence>
<proteinExistence type="inferred from homology"/>
<evidence type="ECO:0000255" key="1">
    <source>
        <dbReference type="HAMAP-Rule" id="MF_01371"/>
    </source>
</evidence>
<evidence type="ECO:0000305" key="2"/>
<gene>
    <name evidence="1" type="primary">rpmD</name>
    <name type="ordered locus">Kole_1884</name>
</gene>